<comment type="function">
    <text evidence="1">Acts as a transcriptional regulator in bone development. Probable morphogenetic role. Binds to DNA (By similarity).</text>
</comment>
<comment type="subunit">
    <text evidence="1">Interacts with MINT, with XRCC6 (Ku70) and XRCC5 (Ku80).</text>
</comment>
<comment type="subcellular location">
    <subcellularLocation>
        <location>Nucleus</location>
    </subcellularLocation>
</comment>
<comment type="tissue specificity">
    <text>Expressed in neural crest-derived mesenchyme and lateral plate mesoderm.</text>
</comment>
<comment type="similarity">
    <text evidence="4">Belongs to the Msh homeobox family.</text>
</comment>
<protein>
    <recommendedName>
        <fullName>Homeobox protein MSX-2</fullName>
    </recommendedName>
    <alternativeName>
        <fullName>MSX-1</fullName>
    </alternativeName>
    <alternativeName>
        <fullName>QUOX-7</fullName>
    </alternativeName>
</protein>
<gene>
    <name type="primary">MSX2</name>
    <name type="synonym">MSX1</name>
    <name type="synonym">QUOX-7</name>
</gene>
<evidence type="ECO:0000250" key="1"/>
<evidence type="ECO:0000255" key="2">
    <source>
        <dbReference type="PROSITE-ProRule" id="PRU00108"/>
    </source>
</evidence>
<evidence type="ECO:0000256" key="3">
    <source>
        <dbReference type="SAM" id="MobiDB-lite"/>
    </source>
</evidence>
<evidence type="ECO:0000305" key="4"/>
<dbReference type="EMBL" id="M57611">
    <property type="protein sequence ID" value="AAA63459.1"/>
    <property type="molecule type" value="mRNA"/>
</dbReference>
<dbReference type="PIR" id="A38284">
    <property type="entry name" value="A38284"/>
</dbReference>
<dbReference type="SMR" id="P23410"/>
<dbReference type="Proteomes" id="UP000694412">
    <property type="component" value="Unplaced"/>
</dbReference>
<dbReference type="GO" id="GO:0005634">
    <property type="term" value="C:nucleus"/>
    <property type="evidence" value="ECO:0007669"/>
    <property type="project" value="UniProtKB-SubCell"/>
</dbReference>
<dbReference type="GO" id="GO:0000981">
    <property type="term" value="F:DNA-binding transcription factor activity, RNA polymerase II-specific"/>
    <property type="evidence" value="ECO:0007669"/>
    <property type="project" value="InterPro"/>
</dbReference>
<dbReference type="GO" id="GO:0000977">
    <property type="term" value="F:RNA polymerase II transcription regulatory region sequence-specific DNA binding"/>
    <property type="evidence" value="ECO:0007669"/>
    <property type="project" value="TreeGrafter"/>
</dbReference>
<dbReference type="GO" id="GO:0048598">
    <property type="term" value="P:embryonic morphogenesis"/>
    <property type="evidence" value="ECO:0007669"/>
    <property type="project" value="TreeGrafter"/>
</dbReference>
<dbReference type="GO" id="GO:0001503">
    <property type="term" value="P:ossification"/>
    <property type="evidence" value="ECO:0007669"/>
    <property type="project" value="UniProtKB-KW"/>
</dbReference>
<dbReference type="CDD" id="cd00086">
    <property type="entry name" value="homeodomain"/>
    <property type="match status" value="1"/>
</dbReference>
<dbReference type="FunFam" id="1.10.10.60:FF:000134">
    <property type="entry name" value="Homeobox protein MSX-1"/>
    <property type="match status" value="1"/>
</dbReference>
<dbReference type="Gene3D" id="1.10.10.60">
    <property type="entry name" value="Homeodomain-like"/>
    <property type="match status" value="1"/>
</dbReference>
<dbReference type="InterPro" id="IPR001356">
    <property type="entry name" value="HD"/>
</dbReference>
<dbReference type="InterPro" id="IPR020479">
    <property type="entry name" value="HD_metazoa"/>
</dbReference>
<dbReference type="InterPro" id="IPR017970">
    <property type="entry name" value="Homeobox_CS"/>
</dbReference>
<dbReference type="InterPro" id="IPR009057">
    <property type="entry name" value="Homeodomain-like_sf"/>
</dbReference>
<dbReference type="InterPro" id="IPR050674">
    <property type="entry name" value="Msh_Homeobox_Regulators"/>
</dbReference>
<dbReference type="PANTHER" id="PTHR24338">
    <property type="entry name" value="HOMEOBOX PROTEIN MSX"/>
    <property type="match status" value="1"/>
</dbReference>
<dbReference type="PANTHER" id="PTHR24338:SF10">
    <property type="entry name" value="HOMEOBOX PROTEIN MSX-2"/>
    <property type="match status" value="1"/>
</dbReference>
<dbReference type="Pfam" id="PF00046">
    <property type="entry name" value="Homeodomain"/>
    <property type="match status" value="1"/>
</dbReference>
<dbReference type="PRINTS" id="PR00024">
    <property type="entry name" value="HOMEOBOX"/>
</dbReference>
<dbReference type="SMART" id="SM00389">
    <property type="entry name" value="HOX"/>
    <property type="match status" value="1"/>
</dbReference>
<dbReference type="SUPFAM" id="SSF46689">
    <property type="entry name" value="Homeodomain-like"/>
    <property type="match status" value="1"/>
</dbReference>
<dbReference type="PROSITE" id="PS00027">
    <property type="entry name" value="HOMEOBOX_1"/>
    <property type="match status" value="1"/>
</dbReference>
<dbReference type="PROSITE" id="PS50071">
    <property type="entry name" value="HOMEOBOX_2"/>
    <property type="match status" value="1"/>
</dbReference>
<proteinExistence type="evidence at transcript level"/>
<organism>
    <name type="scientific">Coturnix japonica</name>
    <name type="common">Japanese quail</name>
    <name type="synonym">Coturnix coturnix japonica</name>
    <dbReference type="NCBI Taxonomy" id="93934"/>
    <lineage>
        <taxon>Eukaryota</taxon>
        <taxon>Metazoa</taxon>
        <taxon>Chordata</taxon>
        <taxon>Craniata</taxon>
        <taxon>Vertebrata</taxon>
        <taxon>Euteleostomi</taxon>
        <taxon>Archelosauria</taxon>
        <taxon>Archosauria</taxon>
        <taxon>Dinosauria</taxon>
        <taxon>Saurischia</taxon>
        <taxon>Theropoda</taxon>
        <taxon>Coelurosauria</taxon>
        <taxon>Aves</taxon>
        <taxon>Neognathae</taxon>
        <taxon>Galloanserae</taxon>
        <taxon>Galliformes</taxon>
        <taxon>Phasianidae</taxon>
        <taxon>Perdicinae</taxon>
        <taxon>Coturnix</taxon>
    </lineage>
</organism>
<accession>P23410</accession>
<reference key="1">
    <citation type="journal article" date="1990" name="Proc. Natl. Acad. Sci. U.S.A.">
        <title>cDNA cloning of a quail homeobox gene and its expression in neural crest-derived mesenchyme and lateral plate mesoderm.</title>
        <authorList>
            <person name="Takahashi Y."/>
            <person name="le Douarin N.M."/>
        </authorList>
    </citation>
    <scope>NUCLEOTIDE SEQUENCE [MRNA]</scope>
</reference>
<name>MSX2_COTJA</name>
<sequence>MASPSKAKEVFSSDEEGPAAGAEEHHKVKVSSLPFSVEALMSDKKPPKELPLAAAGSSADGATVGTSRNMLLPGHGSRDAHSPPGALTKTFDTASVKSENSEDGTSWIQEAGRYSPPPRHLSPTACTLRKHKTNRKPRTPFTTSQLLALERKFRQKQYLSIAERAEFSSSLNLTETQVKIWFQNRRAKAKRLQEAELEKLKMAANAMLPSGFSLPFPINSPIQAASLYGTSYPFHRPVLPIPPVGLYATPVGYSMYHLS</sequence>
<keyword id="KW-0217">Developmental protein</keyword>
<keyword id="KW-0238">DNA-binding</keyword>
<keyword id="KW-0371">Homeobox</keyword>
<keyword id="KW-0539">Nucleus</keyword>
<keyword id="KW-0892">Osteogenesis</keyword>
<keyword id="KW-1185">Reference proteome</keyword>
<keyword id="KW-0804">Transcription</keyword>
<keyword id="KW-0805">Transcription regulation</keyword>
<feature type="chain" id="PRO_0000049103" description="Homeobox protein MSX-2">
    <location>
        <begin position="1"/>
        <end position="259"/>
    </location>
</feature>
<feature type="DNA-binding region" description="Homeobox" evidence="2">
    <location>
        <begin position="134"/>
        <end position="193"/>
    </location>
</feature>
<feature type="region of interest" description="Disordered" evidence="3">
    <location>
        <begin position="1"/>
        <end position="29"/>
    </location>
</feature>
<feature type="region of interest" description="Disordered" evidence="3">
    <location>
        <begin position="47"/>
        <end position="124"/>
    </location>
</feature>
<feature type="compositionally biased region" description="Basic and acidic residues" evidence="3">
    <location>
        <begin position="1"/>
        <end position="11"/>
    </location>
</feature>
<feature type="compositionally biased region" description="Polar residues" evidence="3">
    <location>
        <begin position="90"/>
        <end position="108"/>
    </location>
</feature>